<evidence type="ECO:0000255" key="1">
    <source>
        <dbReference type="PROSITE-ProRule" id="PRU00100"/>
    </source>
</evidence>
<evidence type="ECO:0000255" key="2">
    <source>
        <dbReference type="PROSITE-ProRule" id="PRU00143"/>
    </source>
</evidence>
<evidence type="ECO:0000255" key="3">
    <source>
        <dbReference type="PROSITE-ProRule" id="PRU00192"/>
    </source>
</evidence>
<evidence type="ECO:0000255" key="4">
    <source>
        <dbReference type="PROSITE-ProRule" id="PRU00365"/>
    </source>
</evidence>
<evidence type="ECO:0000269" key="5">
    <source>
    </source>
</evidence>
<evidence type="ECO:0000269" key="6">
    <source>
    </source>
</evidence>
<evidence type="ECO:0000269" key="7">
    <source>
    </source>
</evidence>
<evidence type="ECO:0000269" key="8">
    <source>
    </source>
</evidence>
<evidence type="ECO:0000269" key="9">
    <source>
    </source>
</evidence>
<evidence type="ECO:0000269" key="10">
    <source>
    </source>
</evidence>
<evidence type="ECO:0000269" key="11">
    <source>
    </source>
</evidence>
<evidence type="ECO:0000269" key="12">
    <source>
    </source>
</evidence>
<evidence type="ECO:0000269" key="13">
    <source ref="3"/>
</evidence>
<evidence type="ECO:0000303" key="14">
    <source>
    </source>
</evidence>
<evidence type="ECO:0000305" key="15"/>
<evidence type="ECO:0007744" key="16">
    <source>
    </source>
</evidence>
<evidence type="ECO:0007744" key="17">
    <source>
    </source>
</evidence>
<evidence type="ECO:0007829" key="18">
    <source>
        <dbReference type="PDB" id="3LRA"/>
    </source>
</evidence>
<evidence type="ECO:0007829" key="19">
    <source>
        <dbReference type="PDB" id="3O46"/>
    </source>
</evidence>
<accession>Q5T2T1</accession>
<accession>B2RCC9</accession>
<accession>B4DWL9</accession>
<accession>B5MDZ3</accession>
<accession>D3DRW3</accession>
<accession>Q5T2T0</accession>
<accession>Q8IY28</accession>
<proteinExistence type="evidence at protein level"/>
<comment type="function">
    <text evidence="9">Acts as an important adapter that promotes epithelial cell polarity and tight junction formation via its interaction with DLG1. Involved in the assembly of protein complexes at sites of cell-cell contact.</text>
</comment>
<comment type="subunit">
    <text evidence="7 8 9 11">Heterodimer; able to heterodimerize via its C-terminal L27 domain with LIN7A, LIN7B and LIN7C. Forms a tripartite complex composed of DLG1, MPP7 and LIN7 (LIN7A or LIN7C). Interacts with DLG1 via its N-terminal L27 domain. Interacts with PALS1 and PATJ.</text>
</comment>
<comment type="interaction">
    <interactant intactId="EBI-2514004">
        <id>Q5T2T1</id>
    </interactant>
    <interactant intactId="EBI-12000556">
        <id>Q9Y2H0-1</id>
        <label>DLGAP4</label>
    </interactant>
    <organismsDiffer>false</organismsDiffer>
    <experiments>3</experiments>
</comment>
<comment type="interaction">
    <interactant intactId="EBI-2514004">
        <id>Q5T2T1</id>
    </interactant>
    <interactant intactId="EBI-748664">
        <id>O75506</id>
        <label>HSBP1</label>
    </interactant>
    <organismsDiffer>false</organismsDiffer>
    <experiments>3</experiments>
</comment>
<comment type="interaction">
    <interactant intactId="EBI-2514004">
        <id>Q5T2T1</id>
    </interactant>
    <interactant intactId="EBI-2513988">
        <id>O14910</id>
        <label>LIN7A</label>
    </interactant>
    <organismsDiffer>false</organismsDiffer>
    <experiments>9</experiments>
</comment>
<comment type="interaction">
    <interactant intactId="EBI-2514004">
        <id>Q5T2T1</id>
    </interactant>
    <interactant intactId="EBI-821335">
        <id>Q9HAP6</id>
        <label>LIN7B</label>
    </interactant>
    <organismsDiffer>false</organismsDiffer>
    <experiments>5</experiments>
</comment>
<comment type="interaction">
    <interactant intactId="EBI-2514004">
        <id>Q5T2T1</id>
    </interactant>
    <interactant intactId="EBI-1171517">
        <id>Q9NUP9</id>
        <label>LIN7C</label>
    </interactant>
    <organismsDiffer>false</organismsDiffer>
    <experiments>6</experiments>
</comment>
<comment type="interaction">
    <interactant intactId="EBI-2514004">
        <id>Q5T2T1</id>
    </interactant>
    <interactant intactId="EBI-12262412">
        <id>Q5VVJ2</id>
        <label>MYSM1</label>
    </interactant>
    <organismsDiffer>false</organismsDiffer>
    <experiments>3</experiments>
</comment>
<comment type="interaction">
    <interactant intactId="EBI-2514004">
        <id>Q5T2T1</id>
    </interactant>
    <interactant intactId="EBI-12840050">
        <id>Q9C035-3</id>
        <label>TRIM5</label>
    </interactant>
    <organismsDiffer>false</organismsDiffer>
    <experiments>3</experiments>
</comment>
<comment type="subcellular location">
    <subcellularLocation>
        <location>Membrane</location>
        <topology evidence="9">Peripheral membrane protein</topology>
    </subcellularLocation>
    <subcellularLocation>
        <location>Lateral cell membrane</location>
        <topology evidence="9">Peripheral membrane protein</topology>
    </subcellularLocation>
    <subcellularLocation>
        <location evidence="8 9">Cell junction</location>
        <location evidence="8 9">Tight junction</location>
    </subcellularLocation>
    <subcellularLocation>
        <location evidence="8 9">Cell junction</location>
        <location evidence="8 9">Adherens junction</location>
    </subcellularLocation>
    <subcellularLocation>
        <location evidence="12">Cytoplasm</location>
        <location evidence="12">Cell cortex</location>
    </subcellularLocation>
    <subcellularLocation>
        <location evidence="12">Cytoplasm</location>
    </subcellularLocation>
    <text evidence="9">In epidermal cells, detected primarily at the lateral cell membrane.</text>
</comment>
<comment type="alternative products">
    <event type="alternative splicing"/>
    <isoform>
        <id>Q5T2T1-1</id>
        <name>1</name>
        <sequence type="displayed"/>
    </isoform>
    <isoform>
        <id>Q5T2T1-2</id>
        <name>2</name>
        <sequence type="described" ref="VSP_056065 VSP_056066 VSP_056067"/>
    </isoform>
</comment>
<comment type="induction">
    <text evidence="10">Down-regulated in patients suffering of passive Heymann nephritis (at protein level).</text>
</comment>
<comment type="domain">
    <text evidence="12">The phospho-regulated basic and hydrophobic (PRBH) motif is sufficient and important for interaction with phospholipids permitting cortical localization (PubMed:26481050). Phosphorylation of the PRBH motif by aPKC inhibits the association of the protein with the cortical membrane (PubMed:26481050).</text>
</comment>
<comment type="PTM">
    <text evidence="12">Phosphorylated by aPKC which promotes dissociation from the cell cortex.</text>
</comment>
<comment type="similarity">
    <text evidence="15">Belongs to the MAGUK family.</text>
</comment>
<keyword id="KW-0002">3D-structure</keyword>
<keyword id="KW-0025">Alternative splicing</keyword>
<keyword id="KW-0965">Cell junction</keyword>
<keyword id="KW-1003">Cell membrane</keyword>
<keyword id="KW-0963">Cytoplasm</keyword>
<keyword id="KW-0472">Membrane</keyword>
<keyword id="KW-0597">Phosphoprotein</keyword>
<keyword id="KW-1267">Proteomics identification</keyword>
<keyword id="KW-1185">Reference proteome</keyword>
<keyword id="KW-0677">Repeat</keyword>
<keyword id="KW-0728">SH3 domain</keyword>
<keyword id="KW-0796">Tight junction</keyword>
<dbReference type="EMBL" id="AK301592">
    <property type="protein sequence ID" value="BAG63081.1"/>
    <property type="molecule type" value="mRNA"/>
</dbReference>
<dbReference type="EMBL" id="AK315046">
    <property type="protein sequence ID" value="BAG37526.1"/>
    <property type="molecule type" value="mRNA"/>
</dbReference>
<dbReference type="EMBL" id="AL355501">
    <property type="status" value="NOT_ANNOTATED_CDS"/>
    <property type="molecule type" value="Genomic_DNA"/>
</dbReference>
<dbReference type="EMBL" id="AL390866">
    <property type="status" value="NOT_ANNOTATED_CDS"/>
    <property type="molecule type" value="Genomic_DNA"/>
</dbReference>
<dbReference type="EMBL" id="AL391423">
    <property type="status" value="NOT_ANNOTATED_CDS"/>
    <property type="molecule type" value="Genomic_DNA"/>
</dbReference>
<dbReference type="EMBL" id="CH471072">
    <property type="protein sequence ID" value="EAW86045.1"/>
    <property type="molecule type" value="Genomic_DNA"/>
</dbReference>
<dbReference type="EMBL" id="CH471072">
    <property type="protein sequence ID" value="EAW86047.1"/>
    <property type="molecule type" value="Genomic_DNA"/>
</dbReference>
<dbReference type="EMBL" id="BC038105">
    <property type="protein sequence ID" value="AAH38105.1"/>
    <property type="molecule type" value="mRNA"/>
</dbReference>
<dbReference type="CCDS" id="CCDS7158.1">
    <molecule id="Q5T2T1-1"/>
</dbReference>
<dbReference type="RefSeq" id="NP_001305099.1">
    <molecule id="Q5T2T1-1"/>
    <property type="nucleotide sequence ID" value="NM_001318170.2"/>
</dbReference>
<dbReference type="RefSeq" id="NP_775767.2">
    <molecule id="Q5T2T1-1"/>
    <property type="nucleotide sequence ID" value="NM_173496.5"/>
</dbReference>
<dbReference type="RefSeq" id="XP_011517639.1">
    <molecule id="Q5T2T1-1"/>
    <property type="nucleotide sequence ID" value="XM_011519337.3"/>
</dbReference>
<dbReference type="RefSeq" id="XP_047280600.1">
    <molecule id="Q5T2T1-1"/>
    <property type="nucleotide sequence ID" value="XM_047424644.1"/>
</dbReference>
<dbReference type="RefSeq" id="XP_047280601.1">
    <molecule id="Q5T2T1-1"/>
    <property type="nucleotide sequence ID" value="XM_047424645.1"/>
</dbReference>
<dbReference type="RefSeq" id="XP_047280602.1">
    <molecule id="Q5T2T1-1"/>
    <property type="nucleotide sequence ID" value="XM_047424646.1"/>
</dbReference>
<dbReference type="RefSeq" id="XP_047280603.1">
    <molecule id="Q5T2T1-1"/>
    <property type="nucleotide sequence ID" value="XM_047424647.1"/>
</dbReference>
<dbReference type="PDB" id="3LRA">
    <property type="method" value="X-ray"/>
    <property type="resolution" value="2.95 A"/>
    <property type="chains" value="A=9-120"/>
</dbReference>
<dbReference type="PDB" id="3O46">
    <property type="method" value="X-ray"/>
    <property type="resolution" value="1.30 A"/>
    <property type="chains" value="A=135-225"/>
</dbReference>
<dbReference type="PDBsum" id="3LRA"/>
<dbReference type="PDBsum" id="3O46"/>
<dbReference type="SMR" id="Q5T2T1"/>
<dbReference type="BioGRID" id="126785">
    <property type="interactions" value="137"/>
</dbReference>
<dbReference type="CORUM" id="Q5T2T1"/>
<dbReference type="FunCoup" id="Q5T2T1">
    <property type="interactions" value="697"/>
</dbReference>
<dbReference type="IntAct" id="Q5T2T1">
    <property type="interactions" value="51"/>
</dbReference>
<dbReference type="MINT" id="Q5T2T1"/>
<dbReference type="STRING" id="9606.ENSP00000337907"/>
<dbReference type="GlyCosmos" id="Q5T2T1">
    <property type="glycosylation" value="1 site, 1 glycan"/>
</dbReference>
<dbReference type="GlyGen" id="Q5T2T1">
    <property type="glycosylation" value="1 site, 1 O-linked glycan (1 site)"/>
</dbReference>
<dbReference type="iPTMnet" id="Q5T2T1"/>
<dbReference type="PhosphoSitePlus" id="Q5T2T1"/>
<dbReference type="BioMuta" id="MPP7"/>
<dbReference type="DMDM" id="74762233"/>
<dbReference type="jPOST" id="Q5T2T1"/>
<dbReference type="MassIVE" id="Q5T2T1"/>
<dbReference type="PaxDb" id="9606-ENSP00000337907"/>
<dbReference type="PeptideAtlas" id="Q5T2T1"/>
<dbReference type="ProteomicsDB" id="5357"/>
<dbReference type="ProteomicsDB" id="64359">
    <molecule id="Q5T2T1-1"/>
</dbReference>
<dbReference type="Pumba" id="Q5T2T1"/>
<dbReference type="Antibodypedia" id="26125">
    <property type="antibodies" value="103 antibodies from 24 providers"/>
</dbReference>
<dbReference type="DNASU" id="143098"/>
<dbReference type="Ensembl" id="ENST00000337532.9">
    <molecule id="Q5T2T1-1"/>
    <property type="protein sequence ID" value="ENSP00000337907.5"/>
    <property type="gene ID" value="ENSG00000150054.19"/>
</dbReference>
<dbReference type="Ensembl" id="ENST00000375719.7">
    <molecule id="Q5T2T1-1"/>
    <property type="protein sequence ID" value="ENSP00000364871.3"/>
    <property type="gene ID" value="ENSG00000150054.19"/>
</dbReference>
<dbReference type="Ensembl" id="ENST00000375732.5">
    <molecule id="Q5T2T1-1"/>
    <property type="protein sequence ID" value="ENSP00000364884.1"/>
    <property type="gene ID" value="ENSG00000150054.19"/>
</dbReference>
<dbReference type="Ensembl" id="ENST00000683449.1">
    <molecule id="Q5T2T1-1"/>
    <property type="protein sequence ID" value="ENSP00000507917.1"/>
    <property type="gene ID" value="ENSG00000150054.19"/>
</dbReference>
<dbReference type="GeneID" id="143098"/>
<dbReference type="KEGG" id="hsa:143098"/>
<dbReference type="MANE-Select" id="ENST00000683449.1">
    <property type="protein sequence ID" value="ENSP00000507917.1"/>
    <property type="RefSeq nucleotide sequence ID" value="NM_001318170.2"/>
    <property type="RefSeq protein sequence ID" value="NP_001305099.1"/>
</dbReference>
<dbReference type="UCSC" id="uc001iua.2">
    <molecule id="Q5T2T1-1"/>
    <property type="organism name" value="human"/>
</dbReference>
<dbReference type="AGR" id="HGNC:26542"/>
<dbReference type="CTD" id="143098"/>
<dbReference type="DisGeNET" id="143098"/>
<dbReference type="GeneCards" id="MPP7"/>
<dbReference type="HGNC" id="HGNC:26542">
    <property type="gene designation" value="MPP7"/>
</dbReference>
<dbReference type="HPA" id="ENSG00000150054">
    <property type="expression patterns" value="Low tissue specificity"/>
</dbReference>
<dbReference type="MalaCards" id="MPP7"/>
<dbReference type="MIM" id="610973">
    <property type="type" value="gene"/>
</dbReference>
<dbReference type="neXtProt" id="NX_Q5T2T1"/>
<dbReference type="OpenTargets" id="ENSG00000150054"/>
<dbReference type="PharmGKB" id="PA134985345"/>
<dbReference type="VEuPathDB" id="HostDB:ENSG00000150054"/>
<dbReference type="eggNOG" id="KOG0609">
    <property type="taxonomic scope" value="Eukaryota"/>
</dbReference>
<dbReference type="GeneTree" id="ENSGT00940000156232"/>
<dbReference type="HOGENOM" id="CLU_001715_5_0_1"/>
<dbReference type="InParanoid" id="Q5T2T1"/>
<dbReference type="OMA" id="ECILECV"/>
<dbReference type="OrthoDB" id="439127at2759"/>
<dbReference type="PAN-GO" id="Q5T2T1">
    <property type="GO annotations" value="3 GO annotations based on evolutionary models"/>
</dbReference>
<dbReference type="PhylomeDB" id="Q5T2T1"/>
<dbReference type="TreeFam" id="TF314263"/>
<dbReference type="PathwayCommons" id="Q5T2T1"/>
<dbReference type="Reactome" id="R-HSA-9013149">
    <property type="pathway name" value="RAC1 GTPase cycle"/>
</dbReference>
<dbReference type="Reactome" id="R-HSA-9013404">
    <property type="pathway name" value="RAC2 GTPase cycle"/>
</dbReference>
<dbReference type="Reactome" id="R-HSA-9013406">
    <property type="pathway name" value="RHOQ GTPase cycle"/>
</dbReference>
<dbReference type="Reactome" id="R-HSA-9013408">
    <property type="pathway name" value="RHOG GTPase cycle"/>
</dbReference>
<dbReference type="Reactome" id="R-HSA-9013409">
    <property type="pathway name" value="RHOJ GTPase cycle"/>
</dbReference>
<dbReference type="Reactome" id="R-HSA-9013423">
    <property type="pathway name" value="RAC3 GTPase cycle"/>
</dbReference>
<dbReference type="SignaLink" id="Q5T2T1"/>
<dbReference type="BioGRID-ORCS" id="143098">
    <property type="hits" value="9 hits in 1149 CRISPR screens"/>
</dbReference>
<dbReference type="CD-CODE" id="FB4E32DD">
    <property type="entry name" value="Presynaptic clusters and postsynaptic densities"/>
</dbReference>
<dbReference type="ChiTaRS" id="MPP7">
    <property type="organism name" value="human"/>
</dbReference>
<dbReference type="EvolutionaryTrace" id="Q5T2T1"/>
<dbReference type="GenomeRNAi" id="143098"/>
<dbReference type="Pharos" id="Q5T2T1">
    <property type="development level" value="Tbio"/>
</dbReference>
<dbReference type="PRO" id="PR:Q5T2T1"/>
<dbReference type="Proteomes" id="UP000005640">
    <property type="component" value="Chromosome 10"/>
</dbReference>
<dbReference type="RNAct" id="Q5T2T1">
    <property type="molecule type" value="protein"/>
</dbReference>
<dbReference type="Bgee" id="ENSG00000150054">
    <property type="expression patterns" value="Expressed in palpebral conjunctiva and 174 other cell types or tissues"/>
</dbReference>
<dbReference type="ExpressionAtlas" id="Q5T2T1">
    <property type="expression patterns" value="baseline and differential"/>
</dbReference>
<dbReference type="GO" id="GO:0005912">
    <property type="term" value="C:adherens junction"/>
    <property type="evidence" value="ECO:0000314"/>
    <property type="project" value="BHF-UCL"/>
</dbReference>
<dbReference type="GO" id="GO:0005923">
    <property type="term" value="C:bicellular tight junction"/>
    <property type="evidence" value="ECO:0000314"/>
    <property type="project" value="BHF-UCL"/>
</dbReference>
<dbReference type="GO" id="GO:0005938">
    <property type="term" value="C:cell cortex"/>
    <property type="evidence" value="ECO:0007669"/>
    <property type="project" value="UniProtKB-SubCell"/>
</dbReference>
<dbReference type="GO" id="GO:0030054">
    <property type="term" value="C:cell junction"/>
    <property type="evidence" value="ECO:0000314"/>
    <property type="project" value="HPA"/>
</dbReference>
<dbReference type="GO" id="GO:0005911">
    <property type="term" value="C:cell-cell junction"/>
    <property type="evidence" value="ECO:0000318"/>
    <property type="project" value="GO_Central"/>
</dbReference>
<dbReference type="GO" id="GO:0016328">
    <property type="term" value="C:lateral plasma membrane"/>
    <property type="evidence" value="ECO:0007669"/>
    <property type="project" value="UniProtKB-SubCell"/>
</dbReference>
<dbReference type="GO" id="GO:0097025">
    <property type="term" value="C:MPP7-DLG1-LIN7 complex"/>
    <property type="evidence" value="ECO:0000314"/>
    <property type="project" value="BHF-UCL"/>
</dbReference>
<dbReference type="GO" id="GO:0005654">
    <property type="term" value="C:nucleoplasm"/>
    <property type="evidence" value="ECO:0000314"/>
    <property type="project" value="HPA"/>
</dbReference>
<dbReference type="GO" id="GO:0005886">
    <property type="term" value="C:plasma membrane"/>
    <property type="evidence" value="ECO:0000318"/>
    <property type="project" value="GO_Central"/>
</dbReference>
<dbReference type="GO" id="GO:0045296">
    <property type="term" value="F:cadherin binding"/>
    <property type="evidence" value="ECO:0007005"/>
    <property type="project" value="BHF-UCL"/>
</dbReference>
<dbReference type="GO" id="GO:0060090">
    <property type="term" value="F:molecular adaptor activity"/>
    <property type="evidence" value="ECO:0000314"/>
    <property type="project" value="BHF-UCL"/>
</dbReference>
<dbReference type="GO" id="GO:0019904">
    <property type="term" value="F:protein domain specific binding"/>
    <property type="evidence" value="ECO:0000353"/>
    <property type="project" value="BHF-UCL"/>
</dbReference>
<dbReference type="GO" id="GO:0035591">
    <property type="term" value="F:signaling adaptor activity"/>
    <property type="evidence" value="ECO:0000304"/>
    <property type="project" value="BHF-UCL"/>
</dbReference>
<dbReference type="GO" id="GO:0070830">
    <property type="term" value="P:bicellular tight junction assembly"/>
    <property type="evidence" value="ECO:0000314"/>
    <property type="project" value="BHF-UCL"/>
</dbReference>
<dbReference type="GO" id="GO:0030010">
    <property type="term" value="P:establishment of cell polarity"/>
    <property type="evidence" value="ECO:0000304"/>
    <property type="project" value="BHF-UCL"/>
</dbReference>
<dbReference type="GO" id="GO:0031334">
    <property type="term" value="P:positive regulation of protein-containing complex assembly"/>
    <property type="evidence" value="ECO:0000314"/>
    <property type="project" value="BHF-UCL"/>
</dbReference>
<dbReference type="GO" id="GO:0071896">
    <property type="term" value="P:protein localization to adherens junction"/>
    <property type="evidence" value="ECO:0000315"/>
    <property type="project" value="BHF-UCL"/>
</dbReference>
<dbReference type="CDD" id="cd00071">
    <property type="entry name" value="GMPK"/>
    <property type="match status" value="1"/>
</dbReference>
<dbReference type="CDD" id="cd06799">
    <property type="entry name" value="PDZ_MPP3-MPP4-MPP7-like"/>
    <property type="match status" value="1"/>
</dbReference>
<dbReference type="CDD" id="cd12033">
    <property type="entry name" value="SH3_MPP7"/>
    <property type="match status" value="1"/>
</dbReference>
<dbReference type="FunFam" id="3.30.63.10:FF:000002">
    <property type="entry name" value="Guanylate kinase 1"/>
    <property type="match status" value="1"/>
</dbReference>
<dbReference type="FunFam" id="2.30.30.40:FF:000159">
    <property type="entry name" value="MAGUK p55 subfamily member 7"/>
    <property type="match status" value="1"/>
</dbReference>
<dbReference type="FunFam" id="2.30.42.10:FF:000046">
    <property type="entry name" value="MAGUK p55 subfamily member 7"/>
    <property type="match status" value="1"/>
</dbReference>
<dbReference type="FunFam" id="3.40.50.300:FF:000757">
    <property type="entry name" value="MAGUK p55 subfamily member 7"/>
    <property type="match status" value="1"/>
</dbReference>
<dbReference type="Gene3D" id="2.30.42.10">
    <property type="match status" value="1"/>
</dbReference>
<dbReference type="Gene3D" id="1.10.287.650">
    <property type="entry name" value="L27 domain"/>
    <property type="match status" value="1"/>
</dbReference>
<dbReference type="Gene3D" id="3.40.50.300">
    <property type="entry name" value="P-loop containing nucleotide triphosphate hydrolases"/>
    <property type="match status" value="1"/>
</dbReference>
<dbReference type="Gene3D" id="2.30.30.40">
    <property type="entry name" value="SH3 Domains"/>
    <property type="match status" value="1"/>
</dbReference>
<dbReference type="IDEAL" id="IID00515"/>
<dbReference type="InterPro" id="IPR008145">
    <property type="entry name" value="GK/Ca_channel_bsu"/>
</dbReference>
<dbReference type="InterPro" id="IPR008144">
    <property type="entry name" value="Guanylate_kin-like_dom"/>
</dbReference>
<dbReference type="InterPro" id="IPR020590">
    <property type="entry name" value="Guanylate_kinase_CS"/>
</dbReference>
<dbReference type="InterPro" id="IPR014775">
    <property type="entry name" value="L27_C"/>
</dbReference>
<dbReference type="InterPro" id="IPR004172">
    <property type="entry name" value="L27_dom"/>
</dbReference>
<dbReference type="InterPro" id="IPR036892">
    <property type="entry name" value="L27_dom_sf"/>
</dbReference>
<dbReference type="InterPro" id="IPR050716">
    <property type="entry name" value="MAGUK"/>
</dbReference>
<dbReference type="InterPro" id="IPR035599">
    <property type="entry name" value="MPP7_SH3"/>
</dbReference>
<dbReference type="InterPro" id="IPR027417">
    <property type="entry name" value="P-loop_NTPase"/>
</dbReference>
<dbReference type="InterPro" id="IPR001478">
    <property type="entry name" value="PDZ"/>
</dbReference>
<dbReference type="InterPro" id="IPR036034">
    <property type="entry name" value="PDZ_sf"/>
</dbReference>
<dbReference type="InterPro" id="IPR036028">
    <property type="entry name" value="SH3-like_dom_sf"/>
</dbReference>
<dbReference type="InterPro" id="IPR001452">
    <property type="entry name" value="SH3_domain"/>
</dbReference>
<dbReference type="PANTHER" id="PTHR23122">
    <property type="entry name" value="MEMBRANE-ASSOCIATED GUANYLATE KINASE MAGUK"/>
    <property type="match status" value="1"/>
</dbReference>
<dbReference type="Pfam" id="PF00625">
    <property type="entry name" value="Guanylate_kin"/>
    <property type="match status" value="1"/>
</dbReference>
<dbReference type="Pfam" id="PF02828">
    <property type="entry name" value="L27"/>
    <property type="match status" value="2"/>
</dbReference>
<dbReference type="Pfam" id="PF00595">
    <property type="entry name" value="PDZ"/>
    <property type="match status" value="1"/>
</dbReference>
<dbReference type="Pfam" id="PF00018">
    <property type="entry name" value="SH3_1"/>
    <property type="match status" value="1"/>
</dbReference>
<dbReference type="PRINTS" id="PR00452">
    <property type="entry name" value="SH3DOMAIN"/>
</dbReference>
<dbReference type="SMART" id="SM00072">
    <property type="entry name" value="GuKc"/>
    <property type="match status" value="1"/>
</dbReference>
<dbReference type="SMART" id="SM00569">
    <property type="entry name" value="L27"/>
    <property type="match status" value="2"/>
</dbReference>
<dbReference type="SMART" id="SM00228">
    <property type="entry name" value="PDZ"/>
    <property type="match status" value="1"/>
</dbReference>
<dbReference type="SMART" id="SM00326">
    <property type="entry name" value="SH3"/>
    <property type="match status" value="1"/>
</dbReference>
<dbReference type="SUPFAM" id="SSF101288">
    <property type="entry name" value="L27 domain"/>
    <property type="match status" value="1"/>
</dbReference>
<dbReference type="SUPFAM" id="SSF52540">
    <property type="entry name" value="P-loop containing nucleoside triphosphate hydrolases"/>
    <property type="match status" value="1"/>
</dbReference>
<dbReference type="SUPFAM" id="SSF50156">
    <property type="entry name" value="PDZ domain-like"/>
    <property type="match status" value="1"/>
</dbReference>
<dbReference type="SUPFAM" id="SSF50044">
    <property type="entry name" value="SH3-domain"/>
    <property type="match status" value="1"/>
</dbReference>
<dbReference type="PROSITE" id="PS00856">
    <property type="entry name" value="GUANYLATE_KINASE_1"/>
    <property type="match status" value="1"/>
</dbReference>
<dbReference type="PROSITE" id="PS50052">
    <property type="entry name" value="GUANYLATE_KINASE_2"/>
    <property type="match status" value="1"/>
</dbReference>
<dbReference type="PROSITE" id="PS51022">
    <property type="entry name" value="L27"/>
    <property type="match status" value="2"/>
</dbReference>
<dbReference type="PROSITE" id="PS50106">
    <property type="entry name" value="PDZ"/>
    <property type="match status" value="1"/>
</dbReference>
<dbReference type="PROSITE" id="PS50002">
    <property type="entry name" value="SH3"/>
    <property type="match status" value="1"/>
</dbReference>
<reference key="1">
    <citation type="journal article" date="2004" name="Nat. Genet.">
        <title>Complete sequencing and characterization of 21,243 full-length human cDNAs.</title>
        <authorList>
            <person name="Ota T."/>
            <person name="Suzuki Y."/>
            <person name="Nishikawa T."/>
            <person name="Otsuki T."/>
            <person name="Sugiyama T."/>
            <person name="Irie R."/>
            <person name="Wakamatsu A."/>
            <person name="Hayashi K."/>
            <person name="Sato H."/>
            <person name="Nagai K."/>
            <person name="Kimura K."/>
            <person name="Makita H."/>
            <person name="Sekine M."/>
            <person name="Obayashi M."/>
            <person name="Nishi T."/>
            <person name="Shibahara T."/>
            <person name="Tanaka T."/>
            <person name="Ishii S."/>
            <person name="Yamamoto J."/>
            <person name="Saito K."/>
            <person name="Kawai Y."/>
            <person name="Isono Y."/>
            <person name="Nakamura Y."/>
            <person name="Nagahari K."/>
            <person name="Murakami K."/>
            <person name="Yasuda T."/>
            <person name="Iwayanagi T."/>
            <person name="Wagatsuma M."/>
            <person name="Shiratori A."/>
            <person name="Sudo H."/>
            <person name="Hosoiri T."/>
            <person name="Kaku Y."/>
            <person name="Kodaira H."/>
            <person name="Kondo H."/>
            <person name="Sugawara M."/>
            <person name="Takahashi M."/>
            <person name="Kanda K."/>
            <person name="Yokoi T."/>
            <person name="Furuya T."/>
            <person name="Kikkawa E."/>
            <person name="Omura Y."/>
            <person name="Abe K."/>
            <person name="Kamihara K."/>
            <person name="Katsuta N."/>
            <person name="Sato K."/>
            <person name="Tanikawa M."/>
            <person name="Yamazaki M."/>
            <person name="Ninomiya K."/>
            <person name="Ishibashi T."/>
            <person name="Yamashita H."/>
            <person name="Murakawa K."/>
            <person name="Fujimori K."/>
            <person name="Tanai H."/>
            <person name="Kimata M."/>
            <person name="Watanabe M."/>
            <person name="Hiraoka S."/>
            <person name="Chiba Y."/>
            <person name="Ishida S."/>
            <person name="Ono Y."/>
            <person name="Takiguchi S."/>
            <person name="Watanabe S."/>
            <person name="Yosida M."/>
            <person name="Hotuta T."/>
            <person name="Kusano J."/>
            <person name="Kanehori K."/>
            <person name="Takahashi-Fujii A."/>
            <person name="Hara H."/>
            <person name="Tanase T.-O."/>
            <person name="Nomura Y."/>
            <person name="Togiya S."/>
            <person name="Komai F."/>
            <person name="Hara R."/>
            <person name="Takeuchi K."/>
            <person name="Arita M."/>
            <person name="Imose N."/>
            <person name="Musashino K."/>
            <person name="Yuuki H."/>
            <person name="Oshima A."/>
            <person name="Sasaki N."/>
            <person name="Aotsuka S."/>
            <person name="Yoshikawa Y."/>
            <person name="Matsunawa H."/>
            <person name="Ichihara T."/>
            <person name="Shiohata N."/>
            <person name="Sano S."/>
            <person name="Moriya S."/>
            <person name="Momiyama H."/>
            <person name="Satoh N."/>
            <person name="Takami S."/>
            <person name="Terashima Y."/>
            <person name="Suzuki O."/>
            <person name="Nakagawa S."/>
            <person name="Senoh A."/>
            <person name="Mizoguchi H."/>
            <person name="Goto Y."/>
            <person name="Shimizu F."/>
            <person name="Wakebe H."/>
            <person name="Hishigaki H."/>
            <person name="Watanabe T."/>
            <person name="Sugiyama A."/>
            <person name="Takemoto M."/>
            <person name="Kawakami B."/>
            <person name="Yamazaki M."/>
            <person name="Watanabe K."/>
            <person name="Kumagai A."/>
            <person name="Itakura S."/>
            <person name="Fukuzumi Y."/>
            <person name="Fujimori Y."/>
            <person name="Komiyama M."/>
            <person name="Tashiro H."/>
            <person name="Tanigami A."/>
            <person name="Fujiwara T."/>
            <person name="Ono T."/>
            <person name="Yamada K."/>
            <person name="Fujii Y."/>
            <person name="Ozaki K."/>
            <person name="Hirao M."/>
            <person name="Ohmori Y."/>
            <person name="Kawabata A."/>
            <person name="Hikiji T."/>
            <person name="Kobatake N."/>
            <person name="Inagaki H."/>
            <person name="Ikema Y."/>
            <person name="Okamoto S."/>
            <person name="Okitani R."/>
            <person name="Kawakami T."/>
            <person name="Noguchi S."/>
            <person name="Itoh T."/>
            <person name="Shigeta K."/>
            <person name="Senba T."/>
            <person name="Matsumura K."/>
            <person name="Nakajima Y."/>
            <person name="Mizuno T."/>
            <person name="Morinaga M."/>
            <person name="Sasaki M."/>
            <person name="Togashi T."/>
            <person name="Oyama M."/>
            <person name="Hata H."/>
            <person name="Watanabe M."/>
            <person name="Komatsu T."/>
            <person name="Mizushima-Sugano J."/>
            <person name="Satoh T."/>
            <person name="Shirai Y."/>
            <person name="Takahashi Y."/>
            <person name="Nakagawa K."/>
            <person name="Okumura K."/>
            <person name="Nagase T."/>
            <person name="Nomura N."/>
            <person name="Kikuchi H."/>
            <person name="Masuho Y."/>
            <person name="Yamashita R."/>
            <person name="Nakai K."/>
            <person name="Yada T."/>
            <person name="Nakamura Y."/>
            <person name="Ohara O."/>
            <person name="Isogai T."/>
            <person name="Sugano S."/>
        </authorList>
    </citation>
    <scope>NUCLEOTIDE SEQUENCE [LARGE SCALE MRNA] (ISOFORMS 1 AND 2)</scope>
    <scope>VARIANT ARG-322</scope>
    <source>
        <tissue>Hippocampus</tissue>
        <tissue>Mammary gland</tissue>
    </source>
</reference>
<reference key="2">
    <citation type="journal article" date="2004" name="Nature">
        <title>The DNA sequence and comparative analysis of human chromosome 10.</title>
        <authorList>
            <person name="Deloukas P."/>
            <person name="Earthrowl M.E."/>
            <person name="Grafham D.V."/>
            <person name="Rubenfield M."/>
            <person name="French L."/>
            <person name="Steward C.A."/>
            <person name="Sims S.K."/>
            <person name="Jones M.C."/>
            <person name="Searle S."/>
            <person name="Scott C."/>
            <person name="Howe K."/>
            <person name="Hunt S.E."/>
            <person name="Andrews T.D."/>
            <person name="Gilbert J.G.R."/>
            <person name="Swarbreck D."/>
            <person name="Ashurst J.L."/>
            <person name="Taylor A."/>
            <person name="Battles J."/>
            <person name="Bird C.P."/>
            <person name="Ainscough R."/>
            <person name="Almeida J.P."/>
            <person name="Ashwell R.I.S."/>
            <person name="Ambrose K.D."/>
            <person name="Babbage A.K."/>
            <person name="Bagguley C.L."/>
            <person name="Bailey J."/>
            <person name="Banerjee R."/>
            <person name="Bates K."/>
            <person name="Beasley H."/>
            <person name="Bray-Allen S."/>
            <person name="Brown A.J."/>
            <person name="Brown J.Y."/>
            <person name="Burford D.C."/>
            <person name="Burrill W."/>
            <person name="Burton J."/>
            <person name="Cahill P."/>
            <person name="Camire D."/>
            <person name="Carter N.P."/>
            <person name="Chapman J.C."/>
            <person name="Clark S.Y."/>
            <person name="Clarke G."/>
            <person name="Clee C.M."/>
            <person name="Clegg S."/>
            <person name="Corby N."/>
            <person name="Coulson A."/>
            <person name="Dhami P."/>
            <person name="Dutta I."/>
            <person name="Dunn M."/>
            <person name="Faulkner L."/>
            <person name="Frankish A."/>
            <person name="Frankland J.A."/>
            <person name="Garner P."/>
            <person name="Garnett J."/>
            <person name="Gribble S."/>
            <person name="Griffiths C."/>
            <person name="Grocock R."/>
            <person name="Gustafson E."/>
            <person name="Hammond S."/>
            <person name="Harley J.L."/>
            <person name="Hart E."/>
            <person name="Heath P.D."/>
            <person name="Ho T.P."/>
            <person name="Hopkins B."/>
            <person name="Horne J."/>
            <person name="Howden P.J."/>
            <person name="Huckle E."/>
            <person name="Hynds C."/>
            <person name="Johnson C."/>
            <person name="Johnson D."/>
            <person name="Kana A."/>
            <person name="Kay M."/>
            <person name="Kimberley A.M."/>
            <person name="Kershaw J.K."/>
            <person name="Kokkinaki M."/>
            <person name="Laird G.K."/>
            <person name="Lawlor S."/>
            <person name="Lee H.M."/>
            <person name="Leongamornlert D.A."/>
            <person name="Laird G."/>
            <person name="Lloyd C."/>
            <person name="Lloyd D.M."/>
            <person name="Loveland J."/>
            <person name="Lovell J."/>
            <person name="McLaren S."/>
            <person name="McLay K.E."/>
            <person name="McMurray A."/>
            <person name="Mashreghi-Mohammadi M."/>
            <person name="Matthews L."/>
            <person name="Milne S."/>
            <person name="Nickerson T."/>
            <person name="Nguyen M."/>
            <person name="Overton-Larty E."/>
            <person name="Palmer S.A."/>
            <person name="Pearce A.V."/>
            <person name="Peck A.I."/>
            <person name="Pelan S."/>
            <person name="Phillimore B."/>
            <person name="Porter K."/>
            <person name="Rice C.M."/>
            <person name="Rogosin A."/>
            <person name="Ross M.T."/>
            <person name="Sarafidou T."/>
            <person name="Sehra H.K."/>
            <person name="Shownkeen R."/>
            <person name="Skuce C.D."/>
            <person name="Smith M."/>
            <person name="Standring L."/>
            <person name="Sycamore N."/>
            <person name="Tester J."/>
            <person name="Thorpe A."/>
            <person name="Torcasso W."/>
            <person name="Tracey A."/>
            <person name="Tromans A."/>
            <person name="Tsolas J."/>
            <person name="Wall M."/>
            <person name="Walsh J."/>
            <person name="Wang H."/>
            <person name="Weinstock K."/>
            <person name="West A.P."/>
            <person name="Willey D.L."/>
            <person name="Whitehead S.L."/>
            <person name="Wilming L."/>
            <person name="Wray P.W."/>
            <person name="Young L."/>
            <person name="Chen Y."/>
            <person name="Lovering R.C."/>
            <person name="Moschonas N.K."/>
            <person name="Siebert R."/>
            <person name="Fechtel K."/>
            <person name="Bentley D."/>
            <person name="Durbin R.M."/>
            <person name="Hubbard T."/>
            <person name="Doucette-Stamm L."/>
            <person name="Beck S."/>
            <person name="Smith D.R."/>
            <person name="Rogers J."/>
        </authorList>
    </citation>
    <scope>NUCLEOTIDE SEQUENCE [LARGE SCALE GENOMIC DNA]</scope>
</reference>
<reference key="3">
    <citation type="submission" date="2005-09" db="EMBL/GenBank/DDBJ databases">
        <authorList>
            <person name="Mural R.J."/>
            <person name="Istrail S."/>
            <person name="Sutton G.G."/>
            <person name="Florea L."/>
            <person name="Halpern A.L."/>
            <person name="Mobarry C.M."/>
            <person name="Lippert R."/>
            <person name="Walenz B."/>
            <person name="Shatkay H."/>
            <person name="Dew I."/>
            <person name="Miller J.R."/>
            <person name="Flanigan M.J."/>
            <person name="Edwards N.J."/>
            <person name="Bolanos R."/>
            <person name="Fasulo D."/>
            <person name="Halldorsson B.V."/>
            <person name="Hannenhalli S."/>
            <person name="Turner R."/>
            <person name="Yooseph S."/>
            <person name="Lu F."/>
            <person name="Nusskern D.R."/>
            <person name="Shue B.C."/>
            <person name="Zheng X.H."/>
            <person name="Zhong F."/>
            <person name="Delcher A.L."/>
            <person name="Huson D.H."/>
            <person name="Kravitz S.A."/>
            <person name="Mouchard L."/>
            <person name="Reinert K."/>
            <person name="Remington K.A."/>
            <person name="Clark A.G."/>
            <person name="Waterman M.S."/>
            <person name="Eichler E.E."/>
            <person name="Adams M.D."/>
            <person name="Hunkapiller M.W."/>
            <person name="Myers E.W."/>
            <person name="Venter J.C."/>
        </authorList>
    </citation>
    <scope>NUCLEOTIDE SEQUENCE [LARGE SCALE GENOMIC DNA]</scope>
    <scope>VARIANT ARG-322</scope>
</reference>
<reference key="4">
    <citation type="journal article" date="2004" name="Genome Res.">
        <title>The status, quality, and expansion of the NIH full-length cDNA project: the Mammalian Gene Collection (MGC).</title>
        <authorList>
            <consortium name="The MGC Project Team"/>
        </authorList>
    </citation>
    <scope>NUCLEOTIDE SEQUENCE [LARGE SCALE MRNA] (ISOFORM 1)</scope>
    <scope>VARIANT ARG-322</scope>
    <source>
        <tissue>Testis</tissue>
    </source>
</reference>
<reference key="5">
    <citation type="journal article" date="2004" name="Int. J. Mol. Med.">
        <title>Identification and characterization of human MPP7 gene and mouse Mpp7 gene in silico.</title>
        <authorList>
            <person name="Katoh M."/>
            <person name="Katoh M."/>
        </authorList>
    </citation>
    <scope>IDENTIFICATION</scope>
</reference>
<reference key="6">
    <citation type="journal article" date="2006" name="Cell">
        <title>A Rich1/Amot complex regulates the Cdc42 GTPase and apical-polarity proteins in epithelial cells.</title>
        <authorList>
            <person name="Wells C.D."/>
            <person name="Fawcett J.P."/>
            <person name="Traweger A."/>
            <person name="Yamanaka Y."/>
            <person name="Goudreault M."/>
            <person name="Elder K."/>
            <person name="Kulkarni S."/>
            <person name="Gish G."/>
            <person name="Virag C."/>
            <person name="Lim C."/>
            <person name="Colwill K."/>
            <person name="Starostine A."/>
            <person name="Metalnikov P."/>
            <person name="Pawson T."/>
        </authorList>
    </citation>
    <scope>INTERACTION WITH PATJ AND PALS1</scope>
</reference>
<reference key="7">
    <citation type="journal article" date="2007" name="J. Biol. Chem.">
        <title>The stardust family protein MPP7 forms a tripartite complex with LIN7 and DLG1 that regulates the stability and localization of DLG1 to cell junctions.</title>
        <authorList>
            <person name="Bohl J."/>
            <person name="Brimer N."/>
            <person name="Lyons C."/>
            <person name="Vande Pol S.B."/>
        </authorList>
    </citation>
    <scope>IDENTIFICATION BY MASS SPECTROMETRY</scope>
    <scope>SUBCELLULAR LOCATION</scope>
    <scope>INTERACTION WITH DLG1; LIN7A; LIN7B AND LIN7C</scope>
</reference>
<reference key="8">
    <citation type="journal article" date="2007" name="J. Proteome Res.">
        <title>Markedly increased urinary preprohaptoglobin and haptoglobin in passive Heymann nephritis: a differential proteomics approach.</title>
        <authorList>
            <person name="Ngai H.-H."/>
            <person name="Sit W.-H."/>
            <person name="Jiang P.-P."/>
            <person name="Thongboonkerd V."/>
            <person name="Wan J.-M."/>
        </authorList>
    </citation>
    <scope>IDENTIFICATION BY MASS SPECTROMETRY</scope>
    <scope>INDUCTION</scope>
</reference>
<reference key="9">
    <citation type="journal article" date="2007" name="Mol. Biol. Cell">
        <title>The MAGUK protein MPP7 binds to the polarity protein hDlg1 and facilitates epithelial tight junction formation.</title>
        <authorList>
            <person name="Stucke V.M."/>
            <person name="Timmerman E."/>
            <person name="Vandekerckhove J."/>
            <person name="Gevaert K."/>
            <person name="Hall A."/>
        </authorList>
    </citation>
    <scope>IDENTIFICATION BY MASS SPECTROMETRY</scope>
    <scope>FUNCTION</scope>
    <scope>SUBCELLULAR LOCATION</scope>
    <scope>INTERACTION WITH DLG1 AND PALS1</scope>
    <scope>MUTAGENESIS OF LEU-38 AND LEU-95</scope>
</reference>
<reference key="10">
    <citation type="journal article" date="2008" name="Proc. Natl. Acad. Sci. U.S.A.">
        <title>A quantitative atlas of mitotic phosphorylation.</title>
        <authorList>
            <person name="Dephoure N."/>
            <person name="Zhou C."/>
            <person name="Villen J."/>
            <person name="Beausoleil S.A."/>
            <person name="Bakalarski C.E."/>
            <person name="Elledge S.J."/>
            <person name="Gygi S.P."/>
        </authorList>
    </citation>
    <scope>PHOSPHORYLATION [LARGE SCALE ANALYSIS] AT SER-409</scope>
    <scope>IDENTIFICATION BY MASS SPECTROMETRY [LARGE SCALE ANALYSIS]</scope>
    <source>
        <tissue>Cervix carcinoma</tissue>
    </source>
</reference>
<reference key="11">
    <citation type="journal article" date="2010" name="Sci. Signal.">
        <title>Quantitative phosphoproteomics reveals widespread full phosphorylation site occupancy during mitosis.</title>
        <authorList>
            <person name="Olsen J.V."/>
            <person name="Vermeulen M."/>
            <person name="Santamaria A."/>
            <person name="Kumar C."/>
            <person name="Miller M.L."/>
            <person name="Jensen L.J."/>
            <person name="Gnad F."/>
            <person name="Cox J."/>
            <person name="Jensen T.S."/>
            <person name="Nigg E.A."/>
            <person name="Brunak S."/>
            <person name="Mann M."/>
        </authorList>
    </citation>
    <scope>PHOSPHORYLATION [LARGE SCALE ANALYSIS] AT SER-409</scope>
    <scope>IDENTIFICATION BY MASS SPECTROMETRY [LARGE SCALE ANALYSIS]</scope>
    <source>
        <tissue>Cervix carcinoma</tissue>
    </source>
</reference>
<reference key="12">
    <citation type="journal article" date="2015" name="Dev. Cell">
        <title>Establishment of Par-Polarized Cortical Domains via Phosphoregulated Membrane Motifs.</title>
        <authorList>
            <person name="Bailey M.J."/>
            <person name="Prehoda K.E."/>
        </authorList>
    </citation>
    <scope>SUBCELLULAR LOCATION</scope>
    <scope>DOMAIN</scope>
    <scope>PHOSPHORYLATION</scope>
</reference>
<reference key="13">
    <citation type="journal article" date="2010" name="FASEB J.">
        <title>Structural basis for tandem L27 domain-mediated polymerization.</title>
        <authorList>
            <person name="Yang X."/>
            <person name="Xie X."/>
            <person name="Chen L."/>
            <person name="Zhou H."/>
            <person name="Wang Z."/>
            <person name="Zhao W."/>
            <person name="Tian R."/>
            <person name="Zhang R."/>
            <person name="Tian C."/>
            <person name="Long J."/>
            <person name="Shen Y."/>
        </authorList>
    </citation>
    <scope>X-RAY CRYSTALLOGRAPHY (2.95 ANGSTROMS) OF 7-120 IN COMPLEX WITH DLG1 AND LIN7C</scope>
    <scope>SUBUNIT</scope>
</reference>
<reference key="14">
    <citation type="submission" date="2010-08" db="PDB data bank">
        <title>Crystal structure of the PDZ domain of mpp7.</title>
        <authorList>
            <consortium name="Structural genomics consortium (SGC)"/>
        </authorList>
    </citation>
    <scope>X-RAY CRYSTALLOGRAPHY (1.3 ANGSTROMS) OF 135-225</scope>
</reference>
<gene>
    <name type="primary">MPP7</name>
</gene>
<sequence>MPALSTGSGSDTGLYELLAALPAQLQPHVDSQEDLTFLWDMFGEKSLHSLVKIHEKLHYYEKQSPVPILHGAAALADDLAEELQNKPLNSEIRELLKLLSKPNVKALLSVHDTVAQKNYDPVLPPMPEDIDDEEDSVKIIRLVKNREPLGATIKKDEQTGAIIVARIMRGGAADRSGLIHVGDELREVNGIPVEDKRPEEIIQILAQSQGAITFKIIPGSKEETPSKEGKMFIKALFDYNPNEDKAIPCKEAGLSFKKGDILQIMSQDDATWWQAKHEADANPRAGLIPSKHFQERRLALRRPEILVQPLKVSNRKSSGFRKSFRLSRKDKKTNKSMYECKKSDQYDTADVPTYEEVTPYRRQTNEKYRLVVLVGPVGVGLNELKRKLLISDTQHYGVTVPHTTRARRSQESDGVEYIFISKHLFETDVQNNKFIEYGEYKNNYYGTSIDSVRSVLAKNKVCLLDVQPHTVKHLRTLEFKPYVIFIKPPSIERLRETRKNAKIISSRDDQGAAKPFTEEDFQEMIKSAQIMESQYGHLFDKIIINDDLTVAFNELKTTFDKLETETHWVPVSWLHS</sequence>
<name>MPP7_HUMAN</name>
<feature type="chain" id="PRO_0000320027" description="MAGUK p55 subfamily member 7">
    <location>
        <begin position="1"/>
        <end position="576"/>
    </location>
</feature>
<feature type="domain" description="L27 1" evidence="4">
    <location>
        <begin position="10"/>
        <end position="65"/>
    </location>
</feature>
<feature type="domain" description="L27 2" evidence="4">
    <location>
        <begin position="67"/>
        <end position="122"/>
    </location>
</feature>
<feature type="domain" description="PDZ" evidence="2">
    <location>
        <begin position="139"/>
        <end position="220"/>
    </location>
</feature>
<feature type="domain" description="SH3" evidence="3">
    <location>
        <begin position="228"/>
        <end position="298"/>
    </location>
</feature>
<feature type="domain" description="Guanylate kinase-like" evidence="1">
    <location>
        <begin position="368"/>
        <end position="560"/>
    </location>
</feature>
<feature type="region of interest" description="Phospho-regulated basic and hydrophobic (PRBH) motif" evidence="12">
    <location>
        <begin position="289"/>
        <end position="383"/>
    </location>
</feature>
<feature type="modified residue" description="Phosphoserine" evidence="16 17">
    <location>
        <position position="409"/>
    </location>
</feature>
<feature type="splice variant" id="VSP_056065" description="In isoform 2." evidence="14">
    <location>
        <begin position="1"/>
        <end position="125"/>
    </location>
</feature>
<feature type="splice variant" id="VSP_056066" description="In isoform 2." evidence="14">
    <original>TVKHLRTLEFKPYVIFIKPPSIERLRETRK</original>
    <variation>GPWFLLPLMAVPWGAKPPNARMTCGSPLDL</variation>
    <location>
        <begin position="470"/>
        <end position="499"/>
    </location>
</feature>
<feature type="splice variant" id="VSP_056067" description="In isoform 2." evidence="14">
    <location>
        <begin position="500"/>
        <end position="576"/>
    </location>
</feature>
<feature type="sequence variant" id="VAR_039110" description="In dbSNP:rs2997211." evidence="5 6 13">
    <original>K</original>
    <variation>R</variation>
    <location>
        <position position="322"/>
    </location>
</feature>
<feature type="mutagenesis site" description="Abolishes interaction with DLG1." evidence="9">
    <original>L</original>
    <variation>S</variation>
    <location>
        <position position="38"/>
    </location>
</feature>
<feature type="mutagenesis site" description="Does not affect the interaction with DLG1." evidence="9">
    <original>L</original>
    <variation>S</variation>
    <location>
        <position position="95"/>
    </location>
</feature>
<feature type="strand" evidence="18">
    <location>
        <begin position="10"/>
        <end position="13"/>
    </location>
</feature>
<feature type="helix" evidence="18">
    <location>
        <begin position="14"/>
        <end position="19"/>
    </location>
</feature>
<feature type="helix" evidence="18">
    <location>
        <begin position="21"/>
        <end position="25"/>
    </location>
</feature>
<feature type="turn" evidence="18">
    <location>
        <begin position="26"/>
        <end position="28"/>
    </location>
</feature>
<feature type="helix" evidence="18">
    <location>
        <begin position="34"/>
        <end position="41"/>
    </location>
</feature>
<feature type="helix" evidence="18">
    <location>
        <begin position="47"/>
        <end position="61"/>
    </location>
</feature>
<feature type="helix" evidence="18">
    <location>
        <begin position="72"/>
        <end position="84"/>
    </location>
</feature>
<feature type="helix" evidence="18">
    <location>
        <begin position="90"/>
        <end position="98"/>
    </location>
</feature>
<feature type="helix" evidence="18">
    <location>
        <begin position="102"/>
        <end position="115"/>
    </location>
</feature>
<feature type="helix" evidence="18">
    <location>
        <begin position="121"/>
        <end position="124"/>
    </location>
</feature>
<feature type="strand" evidence="19">
    <location>
        <begin position="138"/>
        <end position="147"/>
    </location>
</feature>
<feature type="strand" evidence="19">
    <location>
        <begin position="151"/>
        <end position="155"/>
    </location>
</feature>
<feature type="turn" evidence="19">
    <location>
        <begin position="157"/>
        <end position="159"/>
    </location>
</feature>
<feature type="strand" evidence="19">
    <location>
        <begin position="162"/>
        <end position="167"/>
    </location>
</feature>
<feature type="helix" evidence="19">
    <location>
        <begin position="172"/>
        <end position="176"/>
    </location>
</feature>
<feature type="strand" evidence="19">
    <location>
        <begin position="184"/>
        <end position="188"/>
    </location>
</feature>
<feature type="strand" evidence="19">
    <location>
        <begin position="191"/>
        <end position="193"/>
    </location>
</feature>
<feature type="helix" evidence="19">
    <location>
        <begin position="198"/>
        <end position="207"/>
    </location>
</feature>
<feature type="strand" evidence="19">
    <location>
        <begin position="210"/>
        <end position="217"/>
    </location>
</feature>
<organism>
    <name type="scientific">Homo sapiens</name>
    <name type="common">Human</name>
    <dbReference type="NCBI Taxonomy" id="9606"/>
    <lineage>
        <taxon>Eukaryota</taxon>
        <taxon>Metazoa</taxon>
        <taxon>Chordata</taxon>
        <taxon>Craniata</taxon>
        <taxon>Vertebrata</taxon>
        <taxon>Euteleostomi</taxon>
        <taxon>Mammalia</taxon>
        <taxon>Eutheria</taxon>
        <taxon>Euarchontoglires</taxon>
        <taxon>Primates</taxon>
        <taxon>Haplorrhini</taxon>
        <taxon>Catarrhini</taxon>
        <taxon>Hominidae</taxon>
        <taxon>Homo</taxon>
    </lineage>
</organism>
<protein>
    <recommendedName>
        <fullName>MAGUK p55 subfamily member 7</fullName>
    </recommendedName>
</protein>